<feature type="chain" id="PRO_0000414927" description="Sensory neuron membrane protein 2">
    <location>
        <begin position="1"/>
        <end position="577"/>
    </location>
</feature>
<feature type="topological domain" description="Cytoplasmic" evidence="4">
    <location>
        <begin position="1"/>
        <end position="6"/>
    </location>
</feature>
<feature type="transmembrane region" description="Helical" evidence="4">
    <location>
        <begin position="7"/>
        <end position="27"/>
    </location>
</feature>
<feature type="topological domain" description="Extracellular" evidence="4">
    <location>
        <begin position="28"/>
        <end position="519"/>
    </location>
</feature>
<feature type="transmembrane region" description="Helical" evidence="4">
    <location>
        <begin position="520"/>
        <end position="540"/>
    </location>
</feature>
<feature type="topological domain" description="Cytoplasmic" evidence="4">
    <location>
        <begin position="541"/>
        <end position="577"/>
    </location>
</feature>
<feature type="glycosylation site" description="N-linked (GlcNAc...) asparagine" evidence="4">
    <location>
        <position position="66"/>
    </location>
</feature>
<feature type="glycosylation site" description="N-linked (GlcNAc...) asparagine" evidence="4">
    <location>
        <position position="161"/>
    </location>
</feature>
<feature type="glycosylation site" description="N-linked (GlcNAc...) asparagine" evidence="4">
    <location>
        <position position="271"/>
    </location>
</feature>
<feature type="glycosylation site" description="N-linked (GlcNAc...) asparagine" evidence="4">
    <location>
        <position position="307"/>
    </location>
</feature>
<feature type="disulfide bond" evidence="3">
    <location>
        <begin position="316"/>
        <end position="384"/>
    </location>
</feature>
<feature type="disulfide bond" evidence="3">
    <location>
        <begin position="345"/>
        <end position="411"/>
    </location>
</feature>
<feature type="disulfide bond" evidence="3">
    <location>
        <begin position="386"/>
        <end position="400"/>
    </location>
</feature>
<dbReference type="EMBL" id="AAAB01008960">
    <property type="protein sequence ID" value="EAA11629.4"/>
    <property type="status" value="ALT_SEQ"/>
    <property type="molecule type" value="Genomic_DNA"/>
</dbReference>
<dbReference type="SMR" id="Q7Q6R1"/>
<dbReference type="FunCoup" id="Q7Q6R1">
    <property type="interactions" value="4"/>
</dbReference>
<dbReference type="GlyCosmos" id="Q7Q6R1">
    <property type="glycosylation" value="4 sites, No reported glycans"/>
</dbReference>
<dbReference type="PaxDb" id="7165-AGAP005716-PA"/>
<dbReference type="GeneID" id="1276390"/>
<dbReference type="KEGG" id="aga:1276390"/>
<dbReference type="CTD" id="38868"/>
<dbReference type="VEuPathDB" id="VectorBase:AGAMI1_007822"/>
<dbReference type="VEuPathDB" id="VectorBase:AGAP005716"/>
<dbReference type="eggNOG" id="KOG3776">
    <property type="taxonomic scope" value="Eukaryota"/>
</dbReference>
<dbReference type="HOGENOM" id="CLU_019853_1_2_1"/>
<dbReference type="InParanoid" id="Q7Q6R1"/>
<dbReference type="Proteomes" id="UP000007062">
    <property type="component" value="Chromosome 2L"/>
</dbReference>
<dbReference type="GO" id="GO:0016020">
    <property type="term" value="C:membrane"/>
    <property type="evidence" value="ECO:0000318"/>
    <property type="project" value="GO_Central"/>
</dbReference>
<dbReference type="GO" id="GO:0005886">
    <property type="term" value="C:plasma membrane"/>
    <property type="evidence" value="ECO:0007669"/>
    <property type="project" value="UniProtKB-SubCell"/>
</dbReference>
<dbReference type="GO" id="GO:0005044">
    <property type="term" value="F:scavenger receptor activity"/>
    <property type="evidence" value="ECO:0000318"/>
    <property type="project" value="GO_Central"/>
</dbReference>
<dbReference type="GO" id="GO:0007608">
    <property type="term" value="P:sensory perception of smell"/>
    <property type="evidence" value="ECO:0007669"/>
    <property type="project" value="UniProtKB-KW"/>
</dbReference>
<dbReference type="InterPro" id="IPR002159">
    <property type="entry name" value="CD36_fam"/>
</dbReference>
<dbReference type="PANTHER" id="PTHR11923">
    <property type="entry name" value="SCAVENGER RECEPTOR CLASS B TYPE-1 SR-B1"/>
    <property type="match status" value="1"/>
</dbReference>
<dbReference type="PANTHER" id="PTHR11923:SF109">
    <property type="entry name" value="SENSORY NEURON MEMBRANE PROTEIN 2"/>
    <property type="match status" value="1"/>
</dbReference>
<dbReference type="Pfam" id="PF01130">
    <property type="entry name" value="CD36"/>
    <property type="match status" value="1"/>
</dbReference>
<dbReference type="PRINTS" id="PR01609">
    <property type="entry name" value="CD36FAMILY"/>
</dbReference>
<reference evidence="6" key="1">
    <citation type="journal article" date="2002" name="Science">
        <title>The genome sequence of the malaria mosquito Anopheles gambiae.</title>
        <authorList>
            <person name="Holt R.A."/>
            <person name="Subramanian G.M."/>
            <person name="Halpern A."/>
            <person name="Sutton G.G."/>
            <person name="Charlab R."/>
            <person name="Nusskern D.R."/>
            <person name="Wincker P."/>
            <person name="Clark A.G."/>
            <person name="Ribeiro J.M.C."/>
            <person name="Wides R."/>
            <person name="Salzberg S.L."/>
            <person name="Loftus B.J."/>
            <person name="Yandell M.D."/>
            <person name="Majoros W.H."/>
            <person name="Rusch D.B."/>
            <person name="Lai Z."/>
            <person name="Kraft C.L."/>
            <person name="Abril J.F."/>
            <person name="Anthouard V."/>
            <person name="Arensburger P."/>
            <person name="Atkinson P.W."/>
            <person name="Baden H."/>
            <person name="de Berardinis V."/>
            <person name="Baldwin D."/>
            <person name="Benes V."/>
            <person name="Biedler J."/>
            <person name="Blass C."/>
            <person name="Bolanos R."/>
            <person name="Boscus D."/>
            <person name="Barnstead M."/>
            <person name="Cai S."/>
            <person name="Center A."/>
            <person name="Chaturverdi K."/>
            <person name="Christophides G.K."/>
            <person name="Chrystal M.A.M."/>
            <person name="Clamp M."/>
            <person name="Cravchik A."/>
            <person name="Curwen V."/>
            <person name="Dana A."/>
            <person name="Delcher A."/>
            <person name="Dew I."/>
            <person name="Evans C.A."/>
            <person name="Flanigan M."/>
            <person name="Grundschober-Freimoser A."/>
            <person name="Friedli L."/>
            <person name="Gu Z."/>
            <person name="Guan P."/>
            <person name="Guigo R."/>
            <person name="Hillenmeyer M.E."/>
            <person name="Hladun S.L."/>
            <person name="Hogan J.R."/>
            <person name="Hong Y.S."/>
            <person name="Hoover J."/>
            <person name="Jaillon O."/>
            <person name="Ke Z."/>
            <person name="Kodira C.D."/>
            <person name="Kokoza E."/>
            <person name="Koutsos A."/>
            <person name="Letunic I."/>
            <person name="Levitsky A.A."/>
            <person name="Liang Y."/>
            <person name="Lin J.-J."/>
            <person name="Lobo N.F."/>
            <person name="Lopez J.R."/>
            <person name="Malek J.A."/>
            <person name="McIntosh T.C."/>
            <person name="Meister S."/>
            <person name="Miller J.R."/>
            <person name="Mobarry C."/>
            <person name="Mongin E."/>
            <person name="Murphy S.D."/>
            <person name="O'Brochta D.A."/>
            <person name="Pfannkoch C."/>
            <person name="Qi R."/>
            <person name="Regier M.A."/>
            <person name="Remington K."/>
            <person name="Shao H."/>
            <person name="Sharakhova M.V."/>
            <person name="Sitter C.D."/>
            <person name="Shetty J."/>
            <person name="Smith T.J."/>
            <person name="Strong R."/>
            <person name="Sun J."/>
            <person name="Thomasova D."/>
            <person name="Ton L.Q."/>
            <person name="Topalis P."/>
            <person name="Tu Z.J."/>
            <person name="Unger M.F."/>
            <person name="Walenz B."/>
            <person name="Wang A.H."/>
            <person name="Wang J."/>
            <person name="Wang M."/>
            <person name="Wang X."/>
            <person name="Woodford K.J."/>
            <person name="Wortman J.R."/>
            <person name="Wu M."/>
            <person name="Yao A."/>
            <person name="Zdobnov E.M."/>
            <person name="Zhang H."/>
            <person name="Zhao Q."/>
            <person name="Zhao S."/>
            <person name="Zhu S.C."/>
            <person name="Zhimulev I."/>
            <person name="Coluzzi M."/>
            <person name="della Torre A."/>
            <person name="Roth C.W."/>
            <person name="Louis C."/>
            <person name="Kalush F."/>
            <person name="Mural R.J."/>
            <person name="Myers E.W."/>
            <person name="Adams M.D."/>
            <person name="Smith H.O."/>
            <person name="Broder S."/>
            <person name="Gardner M.J."/>
            <person name="Fraser C.M."/>
            <person name="Birney E."/>
            <person name="Bork P."/>
            <person name="Brey P.T."/>
            <person name="Venter J.C."/>
            <person name="Weissenbach J."/>
            <person name="Kafatos F.C."/>
            <person name="Collins F.H."/>
            <person name="Hoffman S.L."/>
        </authorList>
    </citation>
    <scope>NUCLEOTIDE SEQUENCE [LARGE SCALE GENOMIC DNA]</scope>
    <source>
        <strain>PEST</strain>
    </source>
</reference>
<reference evidence="5" key="2">
    <citation type="journal article" date="2008" name="Insect Biochem. Mol. Biol.">
        <title>The SNMP/CD36 gene family in Diptera, Hymenoptera and Coleoptera: Drosophila melanogaster, D. pseudoobscura, Anopheles gambiae, Aedes aegypti, Apis mellifera, and Tribolium castaneum.</title>
        <authorList>
            <person name="Nichols Z."/>
            <person name="Vogt R.G."/>
        </authorList>
    </citation>
    <scope>IDENTIFICATION</scope>
</reference>
<gene>
    <name evidence="6" type="primary">SCRB16</name>
    <name type="ORF">AGAP005716</name>
</gene>
<evidence type="ECO:0000250" key="1">
    <source>
        <dbReference type="UniProtKB" id="C3U0S3"/>
    </source>
</evidence>
<evidence type="ECO:0000250" key="2">
    <source>
        <dbReference type="UniProtKB" id="O02351"/>
    </source>
</evidence>
<evidence type="ECO:0000250" key="3">
    <source>
        <dbReference type="UniProtKB" id="P26201"/>
    </source>
</evidence>
<evidence type="ECO:0000255" key="4"/>
<evidence type="ECO:0000305" key="5"/>
<evidence type="ECO:0000312" key="6">
    <source>
        <dbReference type="EMBL" id="EAA11629.4"/>
    </source>
</evidence>
<keyword id="KW-1003">Cell membrane</keyword>
<keyword id="KW-1015">Disulfide bond</keyword>
<keyword id="KW-0325">Glycoprotein</keyword>
<keyword id="KW-0472">Membrane</keyword>
<keyword id="KW-0552">Olfaction</keyword>
<keyword id="KW-0675">Receptor</keyword>
<keyword id="KW-1185">Reference proteome</keyword>
<keyword id="KW-0716">Sensory transduction</keyword>
<keyword id="KW-0812">Transmembrane</keyword>
<keyword id="KW-1133">Transmembrane helix</keyword>
<organism>
    <name type="scientific">Anopheles gambiae</name>
    <name type="common">African malaria mosquito</name>
    <dbReference type="NCBI Taxonomy" id="7165"/>
    <lineage>
        <taxon>Eukaryota</taxon>
        <taxon>Metazoa</taxon>
        <taxon>Ecdysozoa</taxon>
        <taxon>Arthropoda</taxon>
        <taxon>Hexapoda</taxon>
        <taxon>Insecta</taxon>
        <taxon>Pterygota</taxon>
        <taxon>Neoptera</taxon>
        <taxon>Endopterygota</taxon>
        <taxon>Diptera</taxon>
        <taxon>Nematocera</taxon>
        <taxon>Culicoidea</taxon>
        <taxon>Culicidae</taxon>
        <taxon>Anophelinae</taxon>
        <taxon>Anopheles</taxon>
    </lineage>
</organism>
<name>SNMP2_ANOGA</name>
<accession>Q7Q6R1</accession>
<comment type="function">
    <text evidence="2">Plays an olfactory role that is not restricted to pheromone sensitivity.</text>
</comment>
<comment type="subcellular location">
    <subcellularLocation>
        <location evidence="2">Cell membrane</location>
        <topology evidence="2">Multi-pass membrane protein</topology>
    </subcellularLocation>
</comment>
<comment type="similarity">
    <text evidence="4">Belongs to the CD36 family.</text>
</comment>
<comment type="sequence caution" evidence="5">
    <conflict type="erroneous gene model prediction">
        <sequence resource="EMBL-CDS" id="EAA11629"/>
    </conflict>
</comment>
<proteinExistence type="inferred from homology"/>
<sequence>MVQCTLIWAGIGAMMAVSGALLGWVVFPRAVHEKVIEATELRQGTDQYKRWEALPQPLDFKVYIFNVTNPYEVMQGRRPKVVEVGPYVYFQYRQKDNVRFSRDRSKVHFSQQQMYVFDAESSYPLTENDELTVLNMHMNSILQIIDNQAKETITNFRSDVNNTLEKIPVVRVIKRIIERTTPIQSILQLAEDETYDSLRLINVELNRIFGRPDTMFLRTTPKQFLFDGVPFCVNVIGIAKAICKEIEKRNTKTIRTMPDGSLRFSFFSHKNMTDDGMFTINTGIKDPSRTQMIELWNGRTTLDVWNNRSSGLSSSCNKIHGTDGSGYPPFRTGVERMTIFSTDICRTVDIKLTGSSSYEGIPALRYEIDNNFLHEIGPEYGNDCYCVNKIPKSIVKSNGCLYKGALDLSNCFDAPVVLTLPHMLGVAEEYTALIDGMDPEPERHQIFVDVEPYTGTPLNGGKRVQFNMFLRRIDAIKLTDRLQPTLFPVIWIDEGIALNEDMVKLIDDSLMKVLSLLDVVQWVLIGVGLLLAVLMPTVYFVKRCRGEGSRTVSPAVTATTSAASLSTVAGVTGDRSK</sequence>
<protein>
    <recommendedName>
        <fullName evidence="1">Sensory neuron membrane protein 2</fullName>
    </recommendedName>
</protein>